<proteinExistence type="inferred from homology"/>
<sequence>MITVRTIPELRAAIAAHPGTGRPGKGRPAFVPTMGNLHDGHIALVRQARPLGDVLVASIFVNRLQFLPYEDFDSYPRTWEADCAKLEAAGCDIVFAPRESDLYPEPQTFKLQPDPQLADILEGHFRPGFFTGVCTVVMKLFSAVFFASGGGTAVFGKKDYQQLMVIRRMVQQFALPVEVVAGETARADDGLALSSRNGYLSTAERAQAVQLSAALRALAQAAQAPGAPPLAALEQQALQTLAQQGWAPDYLTVRQRHDLQPPAAGAAAGTLVALGAARLGSTRLIDNLEF</sequence>
<accession>B9MEY7</accession>
<organism>
    <name type="scientific">Acidovorax ebreus (strain TPSY)</name>
    <name type="common">Diaphorobacter sp. (strain TPSY)</name>
    <dbReference type="NCBI Taxonomy" id="535289"/>
    <lineage>
        <taxon>Bacteria</taxon>
        <taxon>Pseudomonadati</taxon>
        <taxon>Pseudomonadota</taxon>
        <taxon>Betaproteobacteria</taxon>
        <taxon>Burkholderiales</taxon>
        <taxon>Comamonadaceae</taxon>
        <taxon>Diaphorobacter</taxon>
    </lineage>
</organism>
<dbReference type="EC" id="6.3.2.1" evidence="1"/>
<dbReference type="EMBL" id="CP001392">
    <property type="protein sequence ID" value="ACM34257.1"/>
    <property type="molecule type" value="Genomic_DNA"/>
</dbReference>
<dbReference type="RefSeq" id="WP_015914136.1">
    <property type="nucleotide sequence ID" value="NC_011992.1"/>
</dbReference>
<dbReference type="SMR" id="B9MEY7"/>
<dbReference type="KEGG" id="dia:Dtpsy_2823"/>
<dbReference type="eggNOG" id="COG0414">
    <property type="taxonomic scope" value="Bacteria"/>
</dbReference>
<dbReference type="HOGENOM" id="CLU_047148_0_0_4"/>
<dbReference type="UniPathway" id="UPA00028">
    <property type="reaction ID" value="UER00005"/>
</dbReference>
<dbReference type="Proteomes" id="UP000000450">
    <property type="component" value="Chromosome"/>
</dbReference>
<dbReference type="GO" id="GO:0005829">
    <property type="term" value="C:cytosol"/>
    <property type="evidence" value="ECO:0007669"/>
    <property type="project" value="TreeGrafter"/>
</dbReference>
<dbReference type="GO" id="GO:0005524">
    <property type="term" value="F:ATP binding"/>
    <property type="evidence" value="ECO:0007669"/>
    <property type="project" value="UniProtKB-KW"/>
</dbReference>
<dbReference type="GO" id="GO:0004592">
    <property type="term" value="F:pantoate-beta-alanine ligase activity"/>
    <property type="evidence" value="ECO:0007669"/>
    <property type="project" value="UniProtKB-UniRule"/>
</dbReference>
<dbReference type="GO" id="GO:0015940">
    <property type="term" value="P:pantothenate biosynthetic process"/>
    <property type="evidence" value="ECO:0007669"/>
    <property type="project" value="UniProtKB-UniRule"/>
</dbReference>
<dbReference type="Gene3D" id="3.40.50.620">
    <property type="entry name" value="HUPs"/>
    <property type="match status" value="1"/>
</dbReference>
<dbReference type="Gene3D" id="3.30.1300.10">
    <property type="entry name" value="Pantoate-beta-alanine ligase, C-terminal domain"/>
    <property type="match status" value="1"/>
</dbReference>
<dbReference type="HAMAP" id="MF_00158">
    <property type="entry name" value="PanC"/>
    <property type="match status" value="1"/>
</dbReference>
<dbReference type="InterPro" id="IPR003721">
    <property type="entry name" value="Pantoate_ligase"/>
</dbReference>
<dbReference type="InterPro" id="IPR042176">
    <property type="entry name" value="Pantoate_ligase_C"/>
</dbReference>
<dbReference type="InterPro" id="IPR014729">
    <property type="entry name" value="Rossmann-like_a/b/a_fold"/>
</dbReference>
<dbReference type="NCBIfam" id="TIGR00018">
    <property type="entry name" value="panC"/>
    <property type="match status" value="1"/>
</dbReference>
<dbReference type="PANTHER" id="PTHR21299">
    <property type="entry name" value="CYTIDYLATE KINASE/PANTOATE-BETA-ALANINE LIGASE"/>
    <property type="match status" value="1"/>
</dbReference>
<dbReference type="PANTHER" id="PTHR21299:SF1">
    <property type="entry name" value="PANTOATE--BETA-ALANINE LIGASE"/>
    <property type="match status" value="1"/>
</dbReference>
<dbReference type="Pfam" id="PF02569">
    <property type="entry name" value="Pantoate_ligase"/>
    <property type="match status" value="1"/>
</dbReference>
<dbReference type="SUPFAM" id="SSF52374">
    <property type="entry name" value="Nucleotidylyl transferase"/>
    <property type="match status" value="1"/>
</dbReference>
<protein>
    <recommendedName>
        <fullName evidence="1">Pantothenate synthetase</fullName>
        <shortName evidence="1">PS</shortName>
        <ecNumber evidence="1">6.3.2.1</ecNumber>
    </recommendedName>
    <alternativeName>
        <fullName evidence="1">Pantoate--beta-alanine ligase</fullName>
    </alternativeName>
    <alternativeName>
        <fullName evidence="1">Pantoate-activating enzyme</fullName>
    </alternativeName>
</protein>
<keyword id="KW-0067">ATP-binding</keyword>
<keyword id="KW-0963">Cytoplasm</keyword>
<keyword id="KW-0436">Ligase</keyword>
<keyword id="KW-0547">Nucleotide-binding</keyword>
<keyword id="KW-0566">Pantothenate biosynthesis</keyword>
<keyword id="KW-1185">Reference proteome</keyword>
<feature type="chain" id="PRO_1000123411" description="Pantothenate synthetase">
    <location>
        <begin position="1"/>
        <end position="290"/>
    </location>
</feature>
<feature type="active site" description="Proton donor" evidence="1">
    <location>
        <position position="41"/>
    </location>
</feature>
<feature type="binding site" evidence="1">
    <location>
        <begin position="34"/>
        <end position="41"/>
    </location>
    <ligand>
        <name>ATP</name>
        <dbReference type="ChEBI" id="CHEBI:30616"/>
    </ligand>
</feature>
<feature type="binding site" evidence="1">
    <location>
        <position position="65"/>
    </location>
    <ligand>
        <name>(R)-pantoate</name>
        <dbReference type="ChEBI" id="CHEBI:15980"/>
    </ligand>
</feature>
<feature type="binding site" evidence="1">
    <location>
        <position position="65"/>
    </location>
    <ligand>
        <name>beta-alanine</name>
        <dbReference type="ChEBI" id="CHEBI:57966"/>
    </ligand>
</feature>
<feature type="binding site" evidence="1">
    <location>
        <begin position="156"/>
        <end position="159"/>
    </location>
    <ligand>
        <name>ATP</name>
        <dbReference type="ChEBI" id="CHEBI:30616"/>
    </ligand>
</feature>
<feature type="binding site" evidence="1">
    <location>
        <position position="162"/>
    </location>
    <ligand>
        <name>(R)-pantoate</name>
        <dbReference type="ChEBI" id="CHEBI:15980"/>
    </ligand>
</feature>
<feature type="binding site" evidence="1">
    <location>
        <position position="185"/>
    </location>
    <ligand>
        <name>ATP</name>
        <dbReference type="ChEBI" id="CHEBI:30616"/>
    </ligand>
</feature>
<feature type="binding site" evidence="1">
    <location>
        <begin position="193"/>
        <end position="196"/>
    </location>
    <ligand>
        <name>ATP</name>
        <dbReference type="ChEBI" id="CHEBI:30616"/>
    </ligand>
</feature>
<gene>
    <name evidence="1" type="primary">panC</name>
    <name type="ordered locus">Dtpsy_2823</name>
</gene>
<reference key="1">
    <citation type="submission" date="2009-01" db="EMBL/GenBank/DDBJ databases">
        <title>Complete sequence of Diaphorobacter sp. TPSY.</title>
        <authorList>
            <consortium name="US DOE Joint Genome Institute"/>
            <person name="Lucas S."/>
            <person name="Copeland A."/>
            <person name="Lapidus A."/>
            <person name="Glavina del Rio T."/>
            <person name="Tice H."/>
            <person name="Bruce D."/>
            <person name="Goodwin L."/>
            <person name="Pitluck S."/>
            <person name="Chertkov O."/>
            <person name="Brettin T."/>
            <person name="Detter J.C."/>
            <person name="Han C."/>
            <person name="Larimer F."/>
            <person name="Land M."/>
            <person name="Hauser L."/>
            <person name="Kyrpides N."/>
            <person name="Mikhailova N."/>
            <person name="Coates J.D."/>
        </authorList>
    </citation>
    <scope>NUCLEOTIDE SEQUENCE [LARGE SCALE GENOMIC DNA]</scope>
    <source>
        <strain>TPSY</strain>
    </source>
</reference>
<evidence type="ECO:0000255" key="1">
    <source>
        <dbReference type="HAMAP-Rule" id="MF_00158"/>
    </source>
</evidence>
<comment type="function">
    <text evidence="1">Catalyzes the condensation of pantoate with beta-alanine in an ATP-dependent reaction via a pantoyl-adenylate intermediate.</text>
</comment>
<comment type="catalytic activity">
    <reaction evidence="1">
        <text>(R)-pantoate + beta-alanine + ATP = (R)-pantothenate + AMP + diphosphate + H(+)</text>
        <dbReference type="Rhea" id="RHEA:10912"/>
        <dbReference type="ChEBI" id="CHEBI:15378"/>
        <dbReference type="ChEBI" id="CHEBI:15980"/>
        <dbReference type="ChEBI" id="CHEBI:29032"/>
        <dbReference type="ChEBI" id="CHEBI:30616"/>
        <dbReference type="ChEBI" id="CHEBI:33019"/>
        <dbReference type="ChEBI" id="CHEBI:57966"/>
        <dbReference type="ChEBI" id="CHEBI:456215"/>
        <dbReference type="EC" id="6.3.2.1"/>
    </reaction>
</comment>
<comment type="pathway">
    <text evidence="1">Cofactor biosynthesis; (R)-pantothenate biosynthesis; (R)-pantothenate from (R)-pantoate and beta-alanine: step 1/1.</text>
</comment>
<comment type="subunit">
    <text evidence="1">Homodimer.</text>
</comment>
<comment type="subcellular location">
    <subcellularLocation>
        <location evidence="1">Cytoplasm</location>
    </subcellularLocation>
</comment>
<comment type="miscellaneous">
    <text evidence="1">The reaction proceeds by a bi uni uni bi ping pong mechanism.</text>
</comment>
<comment type="similarity">
    <text evidence="1">Belongs to the pantothenate synthetase family.</text>
</comment>
<name>PANC_ACIET</name>